<organism>
    <name type="scientific">Adiantum capillus-veneris</name>
    <name type="common">Maidenhair fern</name>
    <dbReference type="NCBI Taxonomy" id="13818"/>
    <lineage>
        <taxon>Eukaryota</taxon>
        <taxon>Viridiplantae</taxon>
        <taxon>Streptophyta</taxon>
        <taxon>Embryophyta</taxon>
        <taxon>Tracheophyta</taxon>
        <taxon>Polypodiopsida</taxon>
        <taxon>Polypodiidae</taxon>
        <taxon>Polypodiales</taxon>
        <taxon>Pteridineae</taxon>
        <taxon>Pteridaceae</taxon>
        <taxon>Vittarioideae</taxon>
        <taxon>Adiantum</taxon>
    </lineage>
</organism>
<name>PSBA_ADICA</name>
<feature type="initiator methionine" description="Removed" evidence="1">
    <location>
        <position position="1"/>
    </location>
</feature>
<feature type="chain" id="PRO_0000090421" description="Photosystem II protein D1" evidence="1">
    <location>
        <begin position="2"/>
        <end position="344"/>
    </location>
</feature>
<feature type="propeptide" id="PRO_0000316434" evidence="1">
    <location>
        <begin position="345"/>
        <end position="353"/>
    </location>
</feature>
<feature type="transmembrane region" description="Helical" evidence="1">
    <location>
        <begin position="29"/>
        <end position="46"/>
    </location>
</feature>
<feature type="transmembrane region" description="Helical" evidence="1">
    <location>
        <begin position="118"/>
        <end position="133"/>
    </location>
</feature>
<feature type="transmembrane region" description="Helical" evidence="1">
    <location>
        <begin position="142"/>
        <end position="156"/>
    </location>
</feature>
<feature type="transmembrane region" description="Helical" evidence="1">
    <location>
        <begin position="197"/>
        <end position="218"/>
    </location>
</feature>
<feature type="transmembrane region" description="Helical" evidence="1">
    <location>
        <begin position="274"/>
        <end position="288"/>
    </location>
</feature>
<feature type="binding site" description="axial binding residue" evidence="1">
    <location>
        <position position="118"/>
    </location>
    <ligand>
        <name>chlorophyll a</name>
        <dbReference type="ChEBI" id="CHEBI:58416"/>
        <label>ChlzD1</label>
    </ligand>
    <ligandPart>
        <name>Mg</name>
        <dbReference type="ChEBI" id="CHEBI:25107"/>
    </ligandPart>
</feature>
<feature type="binding site" evidence="1">
    <location>
        <position position="126"/>
    </location>
    <ligand>
        <name>pheophytin a</name>
        <dbReference type="ChEBI" id="CHEBI:136840"/>
        <label>D1</label>
    </ligand>
</feature>
<feature type="binding site" evidence="1">
    <location>
        <position position="170"/>
    </location>
    <ligand>
        <name>[CaMn4O5] cluster</name>
        <dbReference type="ChEBI" id="CHEBI:189552"/>
    </ligand>
</feature>
<feature type="binding site" evidence="1">
    <location>
        <position position="189"/>
    </location>
    <ligand>
        <name>[CaMn4O5] cluster</name>
        <dbReference type="ChEBI" id="CHEBI:189552"/>
    </ligand>
</feature>
<feature type="binding site" description="axial binding residue" evidence="1">
    <location>
        <position position="198"/>
    </location>
    <ligand>
        <name>chlorophyll a</name>
        <dbReference type="ChEBI" id="CHEBI:58416"/>
        <label>PD1</label>
    </ligand>
    <ligandPart>
        <name>Mg</name>
        <dbReference type="ChEBI" id="CHEBI:25107"/>
    </ligandPart>
</feature>
<feature type="binding site" evidence="1">
    <location>
        <position position="215"/>
    </location>
    <ligand>
        <name>a quinone</name>
        <dbReference type="ChEBI" id="CHEBI:132124"/>
        <label>B</label>
    </ligand>
</feature>
<feature type="binding site" evidence="1">
    <location>
        <position position="215"/>
    </location>
    <ligand>
        <name>Fe cation</name>
        <dbReference type="ChEBI" id="CHEBI:24875"/>
        <note>ligand shared with heterodimeric partner</note>
    </ligand>
</feature>
<feature type="binding site" evidence="1">
    <location>
        <begin position="264"/>
        <end position="265"/>
    </location>
    <ligand>
        <name>a quinone</name>
        <dbReference type="ChEBI" id="CHEBI:132124"/>
        <label>B</label>
    </ligand>
</feature>
<feature type="binding site" evidence="1">
    <location>
        <position position="272"/>
    </location>
    <ligand>
        <name>Fe cation</name>
        <dbReference type="ChEBI" id="CHEBI:24875"/>
        <note>ligand shared with heterodimeric partner</note>
    </ligand>
</feature>
<feature type="binding site" evidence="1">
    <location>
        <position position="332"/>
    </location>
    <ligand>
        <name>[CaMn4O5] cluster</name>
        <dbReference type="ChEBI" id="CHEBI:189552"/>
    </ligand>
</feature>
<feature type="binding site" evidence="1">
    <location>
        <position position="333"/>
    </location>
    <ligand>
        <name>[CaMn4O5] cluster</name>
        <dbReference type="ChEBI" id="CHEBI:189552"/>
    </ligand>
</feature>
<feature type="binding site" evidence="1">
    <location>
        <position position="342"/>
    </location>
    <ligand>
        <name>[CaMn4O5] cluster</name>
        <dbReference type="ChEBI" id="CHEBI:189552"/>
    </ligand>
</feature>
<feature type="binding site" evidence="1">
    <location>
        <position position="344"/>
    </location>
    <ligand>
        <name>[CaMn4O5] cluster</name>
        <dbReference type="ChEBI" id="CHEBI:189552"/>
    </ligand>
</feature>
<feature type="site" description="Tyrosine radical intermediate" evidence="1">
    <location>
        <position position="161"/>
    </location>
</feature>
<feature type="site" description="Stabilizes free radical intermediate" evidence="1">
    <location>
        <position position="190"/>
    </location>
</feature>
<feature type="site" description="Cleavage; by CTPA" evidence="1">
    <location>
        <begin position="344"/>
        <end position="345"/>
    </location>
</feature>
<feature type="modified residue" description="N-acetylthreonine" evidence="1">
    <location>
        <position position="2"/>
    </location>
</feature>
<feature type="modified residue" description="Phosphothreonine" evidence="1">
    <location>
        <position position="2"/>
    </location>
</feature>
<evidence type="ECO:0000255" key="1">
    <source>
        <dbReference type="HAMAP-Rule" id="MF_01379"/>
    </source>
</evidence>
<gene>
    <name evidence="1" type="primary">psbA</name>
</gene>
<keyword id="KW-0007">Acetylation</keyword>
<keyword id="KW-0106">Calcium</keyword>
<keyword id="KW-0148">Chlorophyll</keyword>
<keyword id="KW-0150">Chloroplast</keyword>
<keyword id="KW-0157">Chromophore</keyword>
<keyword id="KW-0249">Electron transport</keyword>
<keyword id="KW-0359">Herbicide resistance</keyword>
<keyword id="KW-0408">Iron</keyword>
<keyword id="KW-0460">Magnesium</keyword>
<keyword id="KW-0464">Manganese</keyword>
<keyword id="KW-0472">Membrane</keyword>
<keyword id="KW-0479">Metal-binding</keyword>
<keyword id="KW-0560">Oxidoreductase</keyword>
<keyword id="KW-0597">Phosphoprotein</keyword>
<keyword id="KW-0602">Photosynthesis</keyword>
<keyword id="KW-0604">Photosystem II</keyword>
<keyword id="KW-0934">Plastid</keyword>
<keyword id="KW-0793">Thylakoid</keyword>
<keyword id="KW-0812">Transmembrane</keyword>
<keyword id="KW-1133">Transmembrane helix</keyword>
<keyword id="KW-0813">Transport</keyword>
<comment type="function">
    <text evidence="1">Photosystem II (PSII) is a light-driven water:plastoquinone oxidoreductase that uses light energy to abstract electrons from H(2)O, generating O(2) and a proton gradient subsequently used for ATP formation. It consists of a core antenna complex that captures photons, and an electron transfer chain that converts photonic excitation into a charge separation. The D1/D2 (PsbA/PsbD) reaction center heterodimer binds P680, the primary electron donor of PSII as well as several subsequent electron acceptors.</text>
</comment>
<comment type="catalytic activity">
    <reaction evidence="1">
        <text>2 a plastoquinone + 4 hnu + 2 H2O = 2 a plastoquinol + O2</text>
        <dbReference type="Rhea" id="RHEA:36359"/>
        <dbReference type="Rhea" id="RHEA-COMP:9561"/>
        <dbReference type="Rhea" id="RHEA-COMP:9562"/>
        <dbReference type="ChEBI" id="CHEBI:15377"/>
        <dbReference type="ChEBI" id="CHEBI:15379"/>
        <dbReference type="ChEBI" id="CHEBI:17757"/>
        <dbReference type="ChEBI" id="CHEBI:30212"/>
        <dbReference type="ChEBI" id="CHEBI:62192"/>
        <dbReference type="EC" id="1.10.3.9"/>
    </reaction>
</comment>
<comment type="cofactor">
    <text evidence="1">The D1/D2 heterodimer binds P680, chlorophylls that are the primary electron donor of PSII, and subsequent electron acceptors. It shares a non-heme iron and each subunit binds pheophytin, quinone, additional chlorophylls, carotenoids and lipids. D1 provides most of the ligands for the Mn4-Ca-O5 cluster of the oxygen-evolving complex (OEC). There is also a Cl(-1) ion associated with D1 and D2, which is required for oxygen evolution. The PSII complex binds additional chlorophylls, carotenoids and specific lipids.</text>
</comment>
<comment type="subunit">
    <text evidence="1">PSII is composed of 1 copy each of membrane proteins PsbA, PsbB, PsbC, PsbD, PsbE, PsbF, PsbH, PsbI, PsbJ, PsbK, PsbL, PsbM, PsbT, PsbX, PsbY, PsbZ, Psb30/Ycf12, at least 3 peripheral proteins of the oxygen-evolving complex and a large number of cofactors. It forms dimeric complexes.</text>
</comment>
<comment type="subcellular location">
    <subcellularLocation>
        <location evidence="1">Plastid</location>
        <location evidence="1">Chloroplast thylakoid membrane</location>
        <topology evidence="1">Multi-pass membrane protein</topology>
    </subcellularLocation>
</comment>
<comment type="PTM">
    <text evidence="1">Tyr-161 forms a radical intermediate that is referred to as redox-active TyrZ, YZ or Y-Z.</text>
</comment>
<comment type="PTM">
    <text evidence="1">C-terminally processed by CTPA; processing is essential to allow assembly of the oxygen-evolving complex and thus photosynthetic growth.</text>
</comment>
<comment type="miscellaneous">
    <text evidence="1">2 of the reaction center chlorophylls (ChlD1 and ChlD2) are entirely coordinated by water.</text>
</comment>
<comment type="miscellaneous">
    <text evidence="1">Herbicides such as atrazine, BNT, diuron or ioxynil bind in the Q(B) binding site and block subsequent electron transfer.</text>
</comment>
<comment type="similarity">
    <text evidence="1">Belongs to the reaction center PufL/M/PsbA/D family.</text>
</comment>
<geneLocation type="chloroplast"/>
<reference key="1">
    <citation type="journal article" date="2003" name="DNA Res.">
        <title>Complete nucleotide sequence of the chloroplast genome from a leptosporangiate fern, Adiantum capillus-veneris L.</title>
        <authorList>
            <person name="Wolf P.G."/>
            <person name="Rowe C.A."/>
            <person name="Sinclair R.B."/>
            <person name="Hasebe M."/>
        </authorList>
    </citation>
    <scope>NUCLEOTIDE SEQUENCE [LARGE SCALE GENOMIC DNA]</scope>
</reference>
<reference key="2">
    <citation type="journal article" date="2004" name="Gene">
        <title>High levels of RNA editing in a vascular plant chloroplast genome: analysis of transcripts from the fern Adiantum capillus-veneris.</title>
        <authorList>
            <person name="Wolf P.G."/>
            <person name="Rowe C.A."/>
            <person name="Hasebe M."/>
        </authorList>
    </citation>
    <scope>NUCLEOTIDE SEQUENCE [GENOMIC DNA]</scope>
    <scope>ABSENCE OF RNA EDITING</scope>
    <source>
        <tissue>Frond</tissue>
    </source>
</reference>
<accession>Q85C23</accession>
<protein>
    <recommendedName>
        <fullName evidence="1">Photosystem II protein D1</fullName>
        <shortName evidence="1">PSII D1 protein</shortName>
        <ecNumber evidence="1">1.10.3.9</ecNumber>
    </recommendedName>
    <alternativeName>
        <fullName evidence="1">Photosystem II Q(B) protein</fullName>
    </alternativeName>
</protein>
<dbReference type="EC" id="1.10.3.9" evidence="1"/>
<dbReference type="EMBL" id="AY178864">
    <property type="protein sequence ID" value="AAP29435.1"/>
    <property type="molecule type" value="Genomic_DNA"/>
</dbReference>
<dbReference type="EMBL" id="AY178864">
    <property type="protein sequence ID" value="AAP29453.1"/>
    <property type="molecule type" value="Genomic_DNA"/>
</dbReference>
<dbReference type="RefSeq" id="NP_848104.1">
    <property type="nucleotide sequence ID" value="NC_004766.1"/>
</dbReference>
<dbReference type="RefSeq" id="NP_848122.1">
    <property type="nucleotide sequence ID" value="NC_004766.1"/>
</dbReference>
<dbReference type="SMR" id="Q85C23"/>
<dbReference type="GeneID" id="807396"/>
<dbReference type="GeneID" id="807432"/>
<dbReference type="OrthoDB" id="1911105at2759"/>
<dbReference type="GO" id="GO:0009535">
    <property type="term" value="C:chloroplast thylakoid membrane"/>
    <property type="evidence" value="ECO:0007669"/>
    <property type="project" value="UniProtKB-SubCell"/>
</dbReference>
<dbReference type="GO" id="GO:0009523">
    <property type="term" value="C:photosystem II"/>
    <property type="evidence" value="ECO:0007669"/>
    <property type="project" value="UniProtKB-KW"/>
</dbReference>
<dbReference type="GO" id="GO:0016168">
    <property type="term" value="F:chlorophyll binding"/>
    <property type="evidence" value="ECO:0007669"/>
    <property type="project" value="UniProtKB-UniRule"/>
</dbReference>
<dbReference type="GO" id="GO:0045156">
    <property type="term" value="F:electron transporter, transferring electrons within the cyclic electron transport pathway of photosynthesis activity"/>
    <property type="evidence" value="ECO:0007669"/>
    <property type="project" value="InterPro"/>
</dbReference>
<dbReference type="GO" id="GO:0005506">
    <property type="term" value="F:iron ion binding"/>
    <property type="evidence" value="ECO:0007669"/>
    <property type="project" value="UniProtKB-UniRule"/>
</dbReference>
<dbReference type="GO" id="GO:0016682">
    <property type="term" value="F:oxidoreductase activity, acting on diphenols and related substances as donors, oxygen as acceptor"/>
    <property type="evidence" value="ECO:0007669"/>
    <property type="project" value="UniProtKB-UniRule"/>
</dbReference>
<dbReference type="GO" id="GO:0010242">
    <property type="term" value="F:oxygen evolving activity"/>
    <property type="evidence" value="ECO:0007669"/>
    <property type="project" value="UniProtKB-EC"/>
</dbReference>
<dbReference type="GO" id="GO:0009772">
    <property type="term" value="P:photosynthetic electron transport in photosystem II"/>
    <property type="evidence" value="ECO:0007669"/>
    <property type="project" value="InterPro"/>
</dbReference>
<dbReference type="GO" id="GO:0009635">
    <property type="term" value="P:response to herbicide"/>
    <property type="evidence" value="ECO:0007669"/>
    <property type="project" value="UniProtKB-KW"/>
</dbReference>
<dbReference type="CDD" id="cd09289">
    <property type="entry name" value="Photosystem-II_D1"/>
    <property type="match status" value="1"/>
</dbReference>
<dbReference type="FunFam" id="1.20.85.10:FF:000002">
    <property type="entry name" value="Photosystem II protein D1"/>
    <property type="match status" value="1"/>
</dbReference>
<dbReference type="Gene3D" id="1.20.85.10">
    <property type="entry name" value="Photosystem II protein D1-like"/>
    <property type="match status" value="1"/>
</dbReference>
<dbReference type="HAMAP" id="MF_01379">
    <property type="entry name" value="PSII_PsbA_D1"/>
    <property type="match status" value="1"/>
</dbReference>
<dbReference type="InterPro" id="IPR055266">
    <property type="entry name" value="D1/D2"/>
</dbReference>
<dbReference type="InterPro" id="IPR036854">
    <property type="entry name" value="Photo_II_D1/D2_sf"/>
</dbReference>
<dbReference type="InterPro" id="IPR000484">
    <property type="entry name" value="Photo_RC_L/M"/>
</dbReference>
<dbReference type="InterPro" id="IPR055265">
    <property type="entry name" value="Photo_RC_L/M_CS"/>
</dbReference>
<dbReference type="InterPro" id="IPR005867">
    <property type="entry name" value="PSII_D1"/>
</dbReference>
<dbReference type="NCBIfam" id="TIGR01151">
    <property type="entry name" value="psbA"/>
    <property type="match status" value="1"/>
</dbReference>
<dbReference type="PANTHER" id="PTHR33149:SF12">
    <property type="entry name" value="PHOTOSYSTEM II D2 PROTEIN"/>
    <property type="match status" value="1"/>
</dbReference>
<dbReference type="PANTHER" id="PTHR33149">
    <property type="entry name" value="PHOTOSYSTEM II PROTEIN D1"/>
    <property type="match status" value="1"/>
</dbReference>
<dbReference type="Pfam" id="PF00124">
    <property type="entry name" value="Photo_RC"/>
    <property type="match status" value="1"/>
</dbReference>
<dbReference type="PRINTS" id="PR00256">
    <property type="entry name" value="REACTNCENTRE"/>
</dbReference>
<dbReference type="SUPFAM" id="SSF81483">
    <property type="entry name" value="Bacterial photosystem II reaction centre, L and M subunits"/>
    <property type="match status" value="1"/>
</dbReference>
<dbReference type="PROSITE" id="PS00244">
    <property type="entry name" value="REACTION_CENTER"/>
    <property type="match status" value="1"/>
</dbReference>
<sequence>MTATLERRESASLWGRFCDWITSTENRLYIGWFGVLMIPTLLTATSVFIIAFVAAPPVDIDGIREPVSGSLLYGNNIISGAIIPTSAAIGLHFYPIWEAASVDEWLYNGGPYELIVLHFLLGVACYMGREWELSFRLGMRPWIAVAYSAPVAAAAAVFLIYPIGQGSFSDGMPLGISGTFNFMIVFQAEHNILMHPFHMLGVAGVFGGSLFSAMHGSLVTSSLIRETTENESANAGYKFGQEEETYNIVAAHGYFGRLIFQYASFNNSRSLHFFLAAWPVVGIWFTALGISTMAFNLNGFNFNQSVVDSQGRVINTWADIINRANLGMEVMHERNAHNFPLDLASVDAPSING</sequence>
<proteinExistence type="evidence at transcript level"/>